<accession>Q5LN66</accession>
<dbReference type="EC" id="2.1.1.192" evidence="1"/>
<dbReference type="EMBL" id="CP000031">
    <property type="protein sequence ID" value="AAV96573.1"/>
    <property type="molecule type" value="Genomic_DNA"/>
</dbReference>
<dbReference type="RefSeq" id="WP_011049029.1">
    <property type="nucleotide sequence ID" value="NC_003911.12"/>
</dbReference>
<dbReference type="SMR" id="Q5LN66"/>
<dbReference type="STRING" id="246200.SPO3346"/>
<dbReference type="PaxDb" id="246200-SPO3346"/>
<dbReference type="KEGG" id="sil:SPO3346"/>
<dbReference type="eggNOG" id="COG0820">
    <property type="taxonomic scope" value="Bacteria"/>
</dbReference>
<dbReference type="HOGENOM" id="CLU_029101_0_0_5"/>
<dbReference type="OrthoDB" id="9793973at2"/>
<dbReference type="Proteomes" id="UP000001023">
    <property type="component" value="Chromosome"/>
</dbReference>
<dbReference type="GO" id="GO:0005737">
    <property type="term" value="C:cytoplasm"/>
    <property type="evidence" value="ECO:0007669"/>
    <property type="project" value="UniProtKB-SubCell"/>
</dbReference>
<dbReference type="GO" id="GO:0051539">
    <property type="term" value="F:4 iron, 4 sulfur cluster binding"/>
    <property type="evidence" value="ECO:0007669"/>
    <property type="project" value="UniProtKB-UniRule"/>
</dbReference>
<dbReference type="GO" id="GO:0046872">
    <property type="term" value="F:metal ion binding"/>
    <property type="evidence" value="ECO:0007669"/>
    <property type="project" value="UniProtKB-KW"/>
</dbReference>
<dbReference type="GO" id="GO:0070040">
    <property type="term" value="F:rRNA (adenine(2503)-C2-)-methyltransferase activity"/>
    <property type="evidence" value="ECO:0007669"/>
    <property type="project" value="UniProtKB-UniRule"/>
</dbReference>
<dbReference type="GO" id="GO:0019843">
    <property type="term" value="F:rRNA binding"/>
    <property type="evidence" value="ECO:0007669"/>
    <property type="project" value="UniProtKB-UniRule"/>
</dbReference>
<dbReference type="GO" id="GO:0002935">
    <property type="term" value="F:tRNA (adenine(37)-C2)-methyltransferase activity"/>
    <property type="evidence" value="ECO:0007669"/>
    <property type="project" value="UniProtKB-UniRule"/>
</dbReference>
<dbReference type="GO" id="GO:0000049">
    <property type="term" value="F:tRNA binding"/>
    <property type="evidence" value="ECO:0007669"/>
    <property type="project" value="UniProtKB-UniRule"/>
</dbReference>
<dbReference type="GO" id="GO:0070475">
    <property type="term" value="P:rRNA base methylation"/>
    <property type="evidence" value="ECO:0007669"/>
    <property type="project" value="UniProtKB-UniRule"/>
</dbReference>
<dbReference type="GO" id="GO:0030488">
    <property type="term" value="P:tRNA methylation"/>
    <property type="evidence" value="ECO:0007669"/>
    <property type="project" value="UniProtKB-UniRule"/>
</dbReference>
<dbReference type="CDD" id="cd01335">
    <property type="entry name" value="Radical_SAM"/>
    <property type="match status" value="1"/>
</dbReference>
<dbReference type="FunFam" id="3.20.20.70:FF:000008">
    <property type="entry name" value="Dual-specificity RNA methyltransferase RlmN"/>
    <property type="match status" value="1"/>
</dbReference>
<dbReference type="Gene3D" id="1.10.150.530">
    <property type="match status" value="1"/>
</dbReference>
<dbReference type="Gene3D" id="3.20.20.70">
    <property type="entry name" value="Aldolase class I"/>
    <property type="match status" value="1"/>
</dbReference>
<dbReference type="HAMAP" id="MF_01849">
    <property type="entry name" value="RNA_methyltr_RlmN"/>
    <property type="match status" value="1"/>
</dbReference>
<dbReference type="InterPro" id="IPR013785">
    <property type="entry name" value="Aldolase_TIM"/>
</dbReference>
<dbReference type="InterPro" id="IPR040072">
    <property type="entry name" value="Methyltransferase_A"/>
</dbReference>
<dbReference type="InterPro" id="IPR048641">
    <property type="entry name" value="RlmN_N"/>
</dbReference>
<dbReference type="InterPro" id="IPR027492">
    <property type="entry name" value="RNA_MTrfase_RlmN"/>
</dbReference>
<dbReference type="InterPro" id="IPR004383">
    <property type="entry name" value="rRNA_lsu_MTrfase_RlmN/Cfr"/>
</dbReference>
<dbReference type="InterPro" id="IPR007197">
    <property type="entry name" value="rSAM"/>
</dbReference>
<dbReference type="NCBIfam" id="TIGR00048">
    <property type="entry name" value="rRNA_mod_RlmN"/>
    <property type="match status" value="1"/>
</dbReference>
<dbReference type="PANTHER" id="PTHR30544">
    <property type="entry name" value="23S RRNA METHYLTRANSFERASE"/>
    <property type="match status" value="1"/>
</dbReference>
<dbReference type="PANTHER" id="PTHR30544:SF5">
    <property type="entry name" value="RADICAL SAM CORE DOMAIN-CONTAINING PROTEIN"/>
    <property type="match status" value="1"/>
</dbReference>
<dbReference type="Pfam" id="PF04055">
    <property type="entry name" value="Radical_SAM"/>
    <property type="match status" value="1"/>
</dbReference>
<dbReference type="Pfam" id="PF21016">
    <property type="entry name" value="RlmN_N"/>
    <property type="match status" value="1"/>
</dbReference>
<dbReference type="PIRSF" id="PIRSF006004">
    <property type="entry name" value="CHP00048"/>
    <property type="match status" value="1"/>
</dbReference>
<dbReference type="SFLD" id="SFLDF00275">
    <property type="entry name" value="adenosine_C2_methyltransferase"/>
    <property type="match status" value="1"/>
</dbReference>
<dbReference type="SFLD" id="SFLDS00029">
    <property type="entry name" value="Radical_SAM"/>
    <property type="match status" value="1"/>
</dbReference>
<dbReference type="SUPFAM" id="SSF102114">
    <property type="entry name" value="Radical SAM enzymes"/>
    <property type="match status" value="1"/>
</dbReference>
<dbReference type="PROSITE" id="PS51918">
    <property type="entry name" value="RADICAL_SAM"/>
    <property type="match status" value="1"/>
</dbReference>
<keyword id="KW-0004">4Fe-4S</keyword>
<keyword id="KW-0963">Cytoplasm</keyword>
<keyword id="KW-1015">Disulfide bond</keyword>
<keyword id="KW-0408">Iron</keyword>
<keyword id="KW-0411">Iron-sulfur</keyword>
<keyword id="KW-0479">Metal-binding</keyword>
<keyword id="KW-0489">Methyltransferase</keyword>
<keyword id="KW-1185">Reference proteome</keyword>
<keyword id="KW-0698">rRNA processing</keyword>
<keyword id="KW-0949">S-adenosyl-L-methionine</keyword>
<keyword id="KW-0808">Transferase</keyword>
<keyword id="KW-0819">tRNA processing</keyword>
<organism>
    <name type="scientific">Ruegeria pomeroyi (strain ATCC 700808 / DSM 15171 / DSS-3)</name>
    <name type="common">Silicibacter pomeroyi</name>
    <dbReference type="NCBI Taxonomy" id="246200"/>
    <lineage>
        <taxon>Bacteria</taxon>
        <taxon>Pseudomonadati</taxon>
        <taxon>Pseudomonadota</taxon>
        <taxon>Alphaproteobacteria</taxon>
        <taxon>Rhodobacterales</taxon>
        <taxon>Roseobacteraceae</taxon>
        <taxon>Ruegeria</taxon>
    </lineage>
</organism>
<proteinExistence type="inferred from homology"/>
<reference key="1">
    <citation type="journal article" date="2004" name="Nature">
        <title>Genome sequence of Silicibacter pomeroyi reveals adaptations to the marine environment.</title>
        <authorList>
            <person name="Moran M.A."/>
            <person name="Buchan A."/>
            <person name="Gonzalez J.M."/>
            <person name="Heidelberg J.F."/>
            <person name="Whitman W.B."/>
            <person name="Kiene R.P."/>
            <person name="Henriksen J.R."/>
            <person name="King G.M."/>
            <person name="Belas R."/>
            <person name="Fuqua C."/>
            <person name="Brinkac L.M."/>
            <person name="Lewis M."/>
            <person name="Johri S."/>
            <person name="Weaver B."/>
            <person name="Pai G."/>
            <person name="Eisen J.A."/>
            <person name="Rahe E."/>
            <person name="Sheldon W.M."/>
            <person name="Ye W."/>
            <person name="Miller T.R."/>
            <person name="Carlton J."/>
            <person name="Rasko D.A."/>
            <person name="Paulsen I.T."/>
            <person name="Ren Q."/>
            <person name="Daugherty S.C."/>
            <person name="DeBoy R.T."/>
            <person name="Dodson R.J."/>
            <person name="Durkin A.S."/>
            <person name="Madupu R."/>
            <person name="Nelson W.C."/>
            <person name="Sullivan S.A."/>
            <person name="Rosovitz M.J."/>
            <person name="Haft D.H."/>
            <person name="Selengut J."/>
            <person name="Ward N."/>
        </authorList>
    </citation>
    <scope>NUCLEOTIDE SEQUENCE [LARGE SCALE GENOMIC DNA]</scope>
    <source>
        <strain>ATCC 700808 / DSM 15171 / DSS-3</strain>
    </source>
</reference>
<reference key="2">
    <citation type="journal article" date="2014" name="Stand. Genomic Sci.">
        <title>An updated genome annotation for the model marine bacterium Ruegeria pomeroyi DSS-3.</title>
        <authorList>
            <person name="Rivers A.R."/>
            <person name="Smith C.B."/>
            <person name="Moran M.A."/>
        </authorList>
    </citation>
    <scope>GENOME REANNOTATION</scope>
    <source>
        <strain>ATCC 700808 / DSM 15171 / DSS-3</strain>
    </source>
</reference>
<feature type="chain" id="PRO_0000350415" description="Dual-specificity RNA methyltransferase RlmN">
    <location>
        <begin position="1"/>
        <end position="393"/>
    </location>
</feature>
<feature type="domain" description="Radical SAM core" evidence="2">
    <location>
        <begin position="121"/>
        <end position="365"/>
    </location>
</feature>
<feature type="active site" description="Proton acceptor" evidence="1">
    <location>
        <position position="115"/>
    </location>
</feature>
<feature type="active site" description="S-methylcysteine intermediate" evidence="1">
    <location>
        <position position="370"/>
    </location>
</feature>
<feature type="binding site" evidence="1">
    <location>
        <position position="135"/>
    </location>
    <ligand>
        <name>[4Fe-4S] cluster</name>
        <dbReference type="ChEBI" id="CHEBI:49883"/>
        <note>4Fe-4S-S-AdoMet</note>
    </ligand>
</feature>
<feature type="binding site" evidence="1">
    <location>
        <position position="139"/>
    </location>
    <ligand>
        <name>[4Fe-4S] cluster</name>
        <dbReference type="ChEBI" id="CHEBI:49883"/>
        <note>4Fe-4S-S-AdoMet</note>
    </ligand>
</feature>
<feature type="binding site" evidence="1">
    <location>
        <position position="142"/>
    </location>
    <ligand>
        <name>[4Fe-4S] cluster</name>
        <dbReference type="ChEBI" id="CHEBI:49883"/>
        <note>4Fe-4S-S-AdoMet</note>
    </ligand>
</feature>
<feature type="binding site" evidence="1">
    <location>
        <begin position="194"/>
        <end position="195"/>
    </location>
    <ligand>
        <name>S-adenosyl-L-methionine</name>
        <dbReference type="ChEBI" id="CHEBI:59789"/>
    </ligand>
</feature>
<feature type="binding site" evidence="1">
    <location>
        <position position="226"/>
    </location>
    <ligand>
        <name>S-adenosyl-L-methionine</name>
        <dbReference type="ChEBI" id="CHEBI:59789"/>
    </ligand>
</feature>
<feature type="binding site" evidence="1">
    <location>
        <begin position="248"/>
        <end position="250"/>
    </location>
    <ligand>
        <name>S-adenosyl-L-methionine</name>
        <dbReference type="ChEBI" id="CHEBI:59789"/>
    </ligand>
</feature>
<feature type="binding site" evidence="1">
    <location>
        <position position="327"/>
    </location>
    <ligand>
        <name>S-adenosyl-L-methionine</name>
        <dbReference type="ChEBI" id="CHEBI:59789"/>
    </ligand>
</feature>
<feature type="disulfide bond" description="(transient)" evidence="1">
    <location>
        <begin position="128"/>
        <end position="370"/>
    </location>
</feature>
<name>RLMN_RUEPO</name>
<gene>
    <name evidence="1" type="primary">rlmN</name>
    <name type="ordered locus">SPO3346</name>
</gene>
<evidence type="ECO:0000255" key="1">
    <source>
        <dbReference type="HAMAP-Rule" id="MF_01849"/>
    </source>
</evidence>
<evidence type="ECO:0000255" key="2">
    <source>
        <dbReference type="PROSITE-ProRule" id="PRU01266"/>
    </source>
</evidence>
<comment type="function">
    <text evidence="1">Specifically methylates position 2 of adenine 2503 in 23S rRNA and position 2 of adenine 37 in tRNAs. m2A2503 modification seems to play a crucial role in the proofreading step occurring at the peptidyl transferase center and thus would serve to optimize ribosomal fidelity.</text>
</comment>
<comment type="catalytic activity">
    <reaction evidence="1">
        <text>adenosine(2503) in 23S rRNA + 2 reduced [2Fe-2S]-[ferredoxin] + 2 S-adenosyl-L-methionine = 2-methyladenosine(2503) in 23S rRNA + 5'-deoxyadenosine + L-methionine + 2 oxidized [2Fe-2S]-[ferredoxin] + S-adenosyl-L-homocysteine</text>
        <dbReference type="Rhea" id="RHEA:42916"/>
        <dbReference type="Rhea" id="RHEA-COMP:10000"/>
        <dbReference type="Rhea" id="RHEA-COMP:10001"/>
        <dbReference type="Rhea" id="RHEA-COMP:10152"/>
        <dbReference type="Rhea" id="RHEA-COMP:10282"/>
        <dbReference type="ChEBI" id="CHEBI:17319"/>
        <dbReference type="ChEBI" id="CHEBI:33737"/>
        <dbReference type="ChEBI" id="CHEBI:33738"/>
        <dbReference type="ChEBI" id="CHEBI:57844"/>
        <dbReference type="ChEBI" id="CHEBI:57856"/>
        <dbReference type="ChEBI" id="CHEBI:59789"/>
        <dbReference type="ChEBI" id="CHEBI:74411"/>
        <dbReference type="ChEBI" id="CHEBI:74497"/>
        <dbReference type="EC" id="2.1.1.192"/>
    </reaction>
</comment>
<comment type="catalytic activity">
    <reaction evidence="1">
        <text>adenosine(37) in tRNA + 2 reduced [2Fe-2S]-[ferredoxin] + 2 S-adenosyl-L-methionine = 2-methyladenosine(37) in tRNA + 5'-deoxyadenosine + L-methionine + 2 oxidized [2Fe-2S]-[ferredoxin] + S-adenosyl-L-homocysteine</text>
        <dbReference type="Rhea" id="RHEA:43332"/>
        <dbReference type="Rhea" id="RHEA-COMP:10000"/>
        <dbReference type="Rhea" id="RHEA-COMP:10001"/>
        <dbReference type="Rhea" id="RHEA-COMP:10162"/>
        <dbReference type="Rhea" id="RHEA-COMP:10485"/>
        <dbReference type="ChEBI" id="CHEBI:17319"/>
        <dbReference type="ChEBI" id="CHEBI:33737"/>
        <dbReference type="ChEBI" id="CHEBI:33738"/>
        <dbReference type="ChEBI" id="CHEBI:57844"/>
        <dbReference type="ChEBI" id="CHEBI:57856"/>
        <dbReference type="ChEBI" id="CHEBI:59789"/>
        <dbReference type="ChEBI" id="CHEBI:74411"/>
        <dbReference type="ChEBI" id="CHEBI:74497"/>
        <dbReference type="EC" id="2.1.1.192"/>
    </reaction>
</comment>
<comment type="cofactor">
    <cofactor evidence="1">
        <name>[4Fe-4S] cluster</name>
        <dbReference type="ChEBI" id="CHEBI:49883"/>
    </cofactor>
    <text evidence="1">Binds 1 [4Fe-4S] cluster. The cluster is coordinated with 3 cysteines and an exchangeable S-adenosyl-L-methionine.</text>
</comment>
<comment type="subcellular location">
    <subcellularLocation>
        <location evidence="1">Cytoplasm</location>
    </subcellularLocation>
</comment>
<comment type="miscellaneous">
    <text evidence="1">Reaction proceeds by a ping-pong mechanism involving intermediate methylation of a conserved cysteine residue.</text>
</comment>
<comment type="similarity">
    <text evidence="1">Belongs to the radical SAM superfamily. RlmN family.</text>
</comment>
<protein>
    <recommendedName>
        <fullName evidence="1">Dual-specificity RNA methyltransferase RlmN</fullName>
        <ecNumber evidence="1">2.1.1.192</ecNumber>
    </recommendedName>
    <alternativeName>
        <fullName evidence="1">23S rRNA (adenine(2503)-C(2))-methyltransferase</fullName>
    </alternativeName>
    <alternativeName>
        <fullName evidence="1">23S rRNA m2A2503 methyltransferase</fullName>
    </alternativeName>
    <alternativeName>
        <fullName evidence="1">Ribosomal RNA large subunit methyltransferase N</fullName>
    </alternativeName>
    <alternativeName>
        <fullName evidence="1">tRNA (adenine(37)-C(2))-methyltransferase</fullName>
    </alternativeName>
    <alternativeName>
        <fullName evidence="1">tRNA m2A37 methyltransferase</fullName>
    </alternativeName>
</protein>
<sequence length="393" mass="44160">MSVKAPITQDVVTIPRKLPEGRINLVGLTRDRMREVLIDHGTPEKQAKMRVGQIWQWIYQWGVRDFEAMTNLAKAYRAQLAEHFTIEIPEVITRLVSEDGTRKYLVRIAGGHEVEVVYIPEEDRGTLCISSQVGCTLTCSFCHTGTQKLVRNLTAAEIVGQVMMARDDLGEWPVPGAPKDETRLLSNIVLMGMGEPLYNFDNVRDAMKIAMDPEGIQLSRRRITLSTSGVVPEIARTAEEIGCLLAISFHATTDEVRDVLVPINKRWNIEELLSALAAYPKVSNSERITFEYVMLDGVNDSDADAHRLLDHIRRYKIPAKINLIPFNEWPGAPYKRSSNNRIRAFANIIYQAGYAAPIRKTRGDDIMAACGQLKSATERARKSKKQIEAETGL</sequence>